<feature type="chain" id="PRO_0000275273" description="Light-independent protochlorophyllide reductase subunit N">
    <location>
        <begin position="1"/>
        <end position="476"/>
    </location>
</feature>
<feature type="binding site" evidence="1">
    <location>
        <position position="31"/>
    </location>
    <ligand>
        <name>[4Fe-4S] cluster</name>
        <dbReference type="ChEBI" id="CHEBI:49883"/>
        <note>ligand shared with heterodimeric partner</note>
    </ligand>
</feature>
<feature type="binding site" evidence="1">
    <location>
        <position position="56"/>
    </location>
    <ligand>
        <name>[4Fe-4S] cluster</name>
        <dbReference type="ChEBI" id="CHEBI:49883"/>
        <note>ligand shared with heterodimeric partner</note>
    </ligand>
</feature>
<feature type="binding site" evidence="1">
    <location>
        <position position="116"/>
    </location>
    <ligand>
        <name>[4Fe-4S] cluster</name>
        <dbReference type="ChEBI" id="CHEBI:49883"/>
        <note>ligand shared with heterodimeric partner</note>
    </ligand>
</feature>
<evidence type="ECO:0000255" key="1">
    <source>
        <dbReference type="HAMAP-Rule" id="MF_00352"/>
    </source>
</evidence>
<sequence length="476" mass="53993">MYFQKKETFFMPLTKDTLTFECETGNYHTFCPISCVAWLYQKIEDSFFLVVGTKTCGYFLQNALGVMIFAEPRYAMAELEEGDISAQLNDYEELKRLCSQIKKDRNPSVIVWIGTCTTEIIKMDLEGMAPRLEAEIDIPIVVARANGLDYAFTQGEDTVLAAMAHRCPDINSVTQNINIEDNGRERLLSFLPSKEKASNERKNESTHPPLVLFGSLPSNVTSQLTLELKKQNIDVSGWLPSQRYAELPSVGEGVYVCGVNPFLSRTATTLMRRRKCKLIGAPFPIGPDGTRAWIEKICSVFGIQPIGLEEREKQIWNSLQDYLNLVRGKSVFFMGDNLLEISLARFLIRCGMIVYEIGIPYMDKRYQAAELALLEKTCQEMNVSLPRIVEKPDNYNQVQRMRELQPDLAITGMAHANPLEARGISTKWSVEFTFAQIHGFTNARDILELVTRPLRRNLSLEQLGWTGLVKRNKLTA</sequence>
<keyword id="KW-0004">4Fe-4S</keyword>
<keyword id="KW-0067">ATP-binding</keyword>
<keyword id="KW-0149">Chlorophyll biosynthesis</keyword>
<keyword id="KW-0150">Chloroplast</keyword>
<keyword id="KW-0408">Iron</keyword>
<keyword id="KW-0411">Iron-sulfur</keyword>
<keyword id="KW-0479">Metal-binding</keyword>
<keyword id="KW-0547">Nucleotide-binding</keyword>
<keyword id="KW-0560">Oxidoreductase</keyword>
<keyword id="KW-0602">Photosynthesis</keyword>
<keyword id="KW-0934">Plastid</keyword>
<geneLocation type="chloroplast"/>
<name>CHLN_STAPU</name>
<comment type="function">
    <text evidence="1">Component of the dark-operative protochlorophyllide reductase (DPOR) that uses Mg-ATP and reduced ferredoxin to reduce ring D of protochlorophyllide (Pchlide) to form chlorophyllide a (Chlide). This reaction is light-independent. The NB-protein (ChlN-ChlB) is the catalytic component of the complex.</text>
</comment>
<comment type="catalytic activity">
    <reaction evidence="1">
        <text>chlorophyllide a + oxidized 2[4Fe-4S]-[ferredoxin] + 2 ADP + 2 phosphate = protochlorophyllide a + reduced 2[4Fe-4S]-[ferredoxin] + 2 ATP + 2 H2O</text>
        <dbReference type="Rhea" id="RHEA:28202"/>
        <dbReference type="Rhea" id="RHEA-COMP:10002"/>
        <dbReference type="Rhea" id="RHEA-COMP:10004"/>
        <dbReference type="ChEBI" id="CHEBI:15377"/>
        <dbReference type="ChEBI" id="CHEBI:30616"/>
        <dbReference type="ChEBI" id="CHEBI:33722"/>
        <dbReference type="ChEBI" id="CHEBI:33723"/>
        <dbReference type="ChEBI" id="CHEBI:43474"/>
        <dbReference type="ChEBI" id="CHEBI:83348"/>
        <dbReference type="ChEBI" id="CHEBI:83350"/>
        <dbReference type="ChEBI" id="CHEBI:456216"/>
        <dbReference type="EC" id="1.3.7.7"/>
    </reaction>
</comment>
<comment type="cofactor">
    <cofactor evidence="1">
        <name>[4Fe-4S] cluster</name>
        <dbReference type="ChEBI" id="CHEBI:49883"/>
    </cofactor>
    <text evidence="1">Binds 1 [4Fe-4S] cluster per heterodimer. The cluster is bound at the heterodimer interface by residues from both subunits.</text>
</comment>
<comment type="pathway">
    <text evidence="1">Porphyrin-containing compound metabolism; chlorophyll biosynthesis (light-independent).</text>
</comment>
<comment type="subunit">
    <text evidence="1">Protochlorophyllide reductase is composed of three subunits; ChlL, ChlN and ChlB. Forms a heterotetramer of two ChlB and two ChlN subunits.</text>
</comment>
<comment type="subcellular location">
    <subcellularLocation>
        <location>Plastid</location>
        <location>Chloroplast</location>
    </subcellularLocation>
</comment>
<comment type="similarity">
    <text evidence="1">Belongs to the BchN/ChlN family.</text>
</comment>
<protein>
    <recommendedName>
        <fullName evidence="1">Light-independent protochlorophyllide reductase subunit N</fullName>
        <shortName evidence="1">DPOR subunit N</shortName>
        <shortName evidence="1">LI-POR subunit N</shortName>
        <ecNumber evidence="1">1.3.7.7</ecNumber>
    </recommendedName>
</protein>
<reference key="1">
    <citation type="journal article" date="2005" name="BMC Biol.">
        <title>The complete chloroplast DNA sequences of the charophycean green algae Staurastrum and Zygnema reveal that the chloroplast genome underwent extensive changes during the evolution of the Zygnematales.</title>
        <authorList>
            <person name="Turmel M."/>
            <person name="Otis C."/>
            <person name="Lemieux C."/>
        </authorList>
    </citation>
    <scope>NUCLEOTIDE SEQUENCE [LARGE SCALE GENOMIC DNA]</scope>
</reference>
<accession>Q32RZ8</accession>
<organism>
    <name type="scientific">Staurastrum punctulatum</name>
    <name type="common">Green alga</name>
    <name type="synonym">Cosmoastrum punctulatum</name>
    <dbReference type="NCBI Taxonomy" id="102822"/>
    <lineage>
        <taxon>Eukaryota</taxon>
        <taxon>Viridiplantae</taxon>
        <taxon>Streptophyta</taxon>
        <taxon>Zygnematophyceae</taxon>
        <taxon>Zygnematophycidae</taxon>
        <taxon>Desmidiales</taxon>
        <taxon>Desmidiaceae</taxon>
        <taxon>Staurastrum</taxon>
    </lineage>
</organism>
<dbReference type="EC" id="1.3.7.7" evidence="1"/>
<dbReference type="EMBL" id="AY958085">
    <property type="protein sequence ID" value="AAX45693.1"/>
    <property type="molecule type" value="Genomic_DNA"/>
</dbReference>
<dbReference type="RefSeq" id="YP_636378.1">
    <property type="nucleotide sequence ID" value="NC_008116.1"/>
</dbReference>
<dbReference type="SMR" id="Q32RZ8"/>
<dbReference type="GeneID" id="4108673"/>
<dbReference type="UniPathway" id="UPA00670"/>
<dbReference type="GO" id="GO:0009507">
    <property type="term" value="C:chloroplast"/>
    <property type="evidence" value="ECO:0007669"/>
    <property type="project" value="UniProtKB-SubCell"/>
</dbReference>
<dbReference type="GO" id="GO:0051539">
    <property type="term" value="F:4 iron, 4 sulfur cluster binding"/>
    <property type="evidence" value="ECO:0007669"/>
    <property type="project" value="UniProtKB-UniRule"/>
</dbReference>
<dbReference type="GO" id="GO:0005524">
    <property type="term" value="F:ATP binding"/>
    <property type="evidence" value="ECO:0007669"/>
    <property type="project" value="UniProtKB-UniRule"/>
</dbReference>
<dbReference type="GO" id="GO:0046872">
    <property type="term" value="F:metal ion binding"/>
    <property type="evidence" value="ECO:0007669"/>
    <property type="project" value="UniProtKB-KW"/>
</dbReference>
<dbReference type="GO" id="GO:0016730">
    <property type="term" value="F:oxidoreductase activity, acting on iron-sulfur proteins as donors"/>
    <property type="evidence" value="ECO:0007669"/>
    <property type="project" value="InterPro"/>
</dbReference>
<dbReference type="GO" id="GO:0016636">
    <property type="term" value="F:oxidoreductase activity, acting on the CH-CH group of donors, iron-sulfur protein as acceptor"/>
    <property type="evidence" value="ECO:0007669"/>
    <property type="project" value="UniProtKB-UniRule"/>
</dbReference>
<dbReference type="GO" id="GO:0036068">
    <property type="term" value="P:light-independent chlorophyll biosynthetic process"/>
    <property type="evidence" value="ECO:0007669"/>
    <property type="project" value="UniProtKB-UniRule"/>
</dbReference>
<dbReference type="GO" id="GO:0019685">
    <property type="term" value="P:photosynthesis, dark reaction"/>
    <property type="evidence" value="ECO:0007669"/>
    <property type="project" value="InterPro"/>
</dbReference>
<dbReference type="CDD" id="cd01979">
    <property type="entry name" value="Pchlide_reductase_N"/>
    <property type="match status" value="1"/>
</dbReference>
<dbReference type="Gene3D" id="3.40.50.1980">
    <property type="entry name" value="Nitrogenase molybdenum iron protein domain"/>
    <property type="match status" value="3"/>
</dbReference>
<dbReference type="HAMAP" id="MF_00352">
    <property type="entry name" value="ChlN_BchN"/>
    <property type="match status" value="1"/>
</dbReference>
<dbReference type="InterPro" id="IPR050293">
    <property type="entry name" value="LIPOR_BchN/ChlN"/>
</dbReference>
<dbReference type="InterPro" id="IPR000510">
    <property type="entry name" value="Nase/OxRdtase_comp1"/>
</dbReference>
<dbReference type="InterPro" id="IPR005970">
    <property type="entry name" value="Protochl_reductN"/>
</dbReference>
<dbReference type="NCBIfam" id="TIGR01279">
    <property type="entry name" value="DPOR_bchN"/>
    <property type="match status" value="1"/>
</dbReference>
<dbReference type="NCBIfam" id="NF002768">
    <property type="entry name" value="PRK02842.1"/>
    <property type="match status" value="1"/>
</dbReference>
<dbReference type="PANTHER" id="PTHR39429">
    <property type="entry name" value="LIGHT-INDEPENDENT PROTOCHLOROPHYLLIDE REDUCTASE SUBUNIT N"/>
    <property type="match status" value="1"/>
</dbReference>
<dbReference type="PANTHER" id="PTHR39429:SF3">
    <property type="entry name" value="LIGHT-INDEPENDENT PROTOCHLOROPHYLLIDE REDUCTASE SUBUNIT N"/>
    <property type="match status" value="1"/>
</dbReference>
<dbReference type="Pfam" id="PF00148">
    <property type="entry name" value="Oxidored_nitro"/>
    <property type="match status" value="1"/>
</dbReference>
<dbReference type="PIRSF" id="PIRSF000162">
    <property type="entry name" value="P_chlorophyll_rd"/>
    <property type="match status" value="1"/>
</dbReference>
<dbReference type="SUPFAM" id="SSF53807">
    <property type="entry name" value="Helical backbone' metal receptor"/>
    <property type="match status" value="1"/>
</dbReference>
<proteinExistence type="inferred from homology"/>
<gene>
    <name evidence="1" type="primary">chlN</name>
</gene>